<protein>
    <recommendedName>
        <fullName evidence="1">Orotidine 5'-phosphate decarboxylase</fullName>
        <ecNumber evidence="1">4.1.1.23</ecNumber>
    </recommendedName>
    <alternativeName>
        <fullName evidence="1">OMP decarboxylase</fullName>
        <shortName evidence="1">OMPDCase</shortName>
        <shortName evidence="1">OMPdecase</shortName>
    </alternativeName>
</protein>
<name>PYRF_POLNA</name>
<proteinExistence type="inferred from homology"/>
<comment type="catalytic activity">
    <reaction evidence="1">
        <text>orotidine 5'-phosphate + H(+) = UMP + CO2</text>
        <dbReference type="Rhea" id="RHEA:11596"/>
        <dbReference type="ChEBI" id="CHEBI:15378"/>
        <dbReference type="ChEBI" id="CHEBI:16526"/>
        <dbReference type="ChEBI" id="CHEBI:57538"/>
        <dbReference type="ChEBI" id="CHEBI:57865"/>
        <dbReference type="EC" id="4.1.1.23"/>
    </reaction>
</comment>
<comment type="pathway">
    <text evidence="1">Pyrimidine metabolism; UMP biosynthesis via de novo pathway; UMP from orotate: step 2/2.</text>
</comment>
<comment type="similarity">
    <text evidence="1">Belongs to the OMP decarboxylase family. Type 2 subfamily.</text>
</comment>
<evidence type="ECO:0000255" key="1">
    <source>
        <dbReference type="HAMAP-Rule" id="MF_01215"/>
    </source>
</evidence>
<organism>
    <name type="scientific">Polaromonas naphthalenivorans (strain CJ2)</name>
    <dbReference type="NCBI Taxonomy" id="365044"/>
    <lineage>
        <taxon>Bacteria</taxon>
        <taxon>Pseudomonadati</taxon>
        <taxon>Pseudomonadota</taxon>
        <taxon>Betaproteobacteria</taxon>
        <taxon>Burkholderiales</taxon>
        <taxon>Comamonadaceae</taxon>
        <taxon>Polaromonas</taxon>
    </lineage>
</organism>
<dbReference type="EC" id="4.1.1.23" evidence="1"/>
<dbReference type="EMBL" id="CP000529">
    <property type="protein sequence ID" value="ABM39139.1"/>
    <property type="molecule type" value="Genomic_DNA"/>
</dbReference>
<dbReference type="RefSeq" id="WP_011803205.1">
    <property type="nucleotide sequence ID" value="NC_008781.1"/>
</dbReference>
<dbReference type="SMR" id="A1VU11"/>
<dbReference type="STRING" id="365044.Pnap_3843"/>
<dbReference type="KEGG" id="pna:Pnap_3843"/>
<dbReference type="eggNOG" id="COG0284">
    <property type="taxonomic scope" value="Bacteria"/>
</dbReference>
<dbReference type="HOGENOM" id="CLU_060704_1_0_4"/>
<dbReference type="UniPathway" id="UPA00070">
    <property type="reaction ID" value="UER00120"/>
</dbReference>
<dbReference type="Proteomes" id="UP000000644">
    <property type="component" value="Chromosome"/>
</dbReference>
<dbReference type="GO" id="GO:0004590">
    <property type="term" value="F:orotidine-5'-phosphate decarboxylase activity"/>
    <property type="evidence" value="ECO:0007669"/>
    <property type="project" value="UniProtKB-UniRule"/>
</dbReference>
<dbReference type="GO" id="GO:0006207">
    <property type="term" value="P:'de novo' pyrimidine nucleobase biosynthetic process"/>
    <property type="evidence" value="ECO:0007669"/>
    <property type="project" value="InterPro"/>
</dbReference>
<dbReference type="GO" id="GO:0044205">
    <property type="term" value="P:'de novo' UMP biosynthetic process"/>
    <property type="evidence" value="ECO:0007669"/>
    <property type="project" value="UniProtKB-UniRule"/>
</dbReference>
<dbReference type="CDD" id="cd04725">
    <property type="entry name" value="OMP_decarboxylase_like"/>
    <property type="match status" value="1"/>
</dbReference>
<dbReference type="Gene3D" id="3.20.20.70">
    <property type="entry name" value="Aldolase class I"/>
    <property type="match status" value="1"/>
</dbReference>
<dbReference type="HAMAP" id="MF_01215">
    <property type="entry name" value="OMPdecase_type2"/>
    <property type="match status" value="1"/>
</dbReference>
<dbReference type="InterPro" id="IPR013785">
    <property type="entry name" value="Aldolase_TIM"/>
</dbReference>
<dbReference type="InterPro" id="IPR018089">
    <property type="entry name" value="OMPdecase_AS"/>
</dbReference>
<dbReference type="InterPro" id="IPR011995">
    <property type="entry name" value="OMPdecase_type-2"/>
</dbReference>
<dbReference type="InterPro" id="IPR001754">
    <property type="entry name" value="OMPdeCOase_dom"/>
</dbReference>
<dbReference type="InterPro" id="IPR011060">
    <property type="entry name" value="RibuloseP-bd_barrel"/>
</dbReference>
<dbReference type="NCBIfam" id="TIGR02127">
    <property type="entry name" value="pyrF_sub2"/>
    <property type="match status" value="1"/>
</dbReference>
<dbReference type="PANTHER" id="PTHR43375">
    <property type="entry name" value="OROTIDINE 5'-PHOSPHATE DECARBOXYLASE"/>
    <property type="match status" value="1"/>
</dbReference>
<dbReference type="PANTHER" id="PTHR43375:SF1">
    <property type="entry name" value="OROTIDINE 5'-PHOSPHATE DECARBOXYLASE"/>
    <property type="match status" value="1"/>
</dbReference>
<dbReference type="Pfam" id="PF00215">
    <property type="entry name" value="OMPdecase"/>
    <property type="match status" value="1"/>
</dbReference>
<dbReference type="SMART" id="SM00934">
    <property type="entry name" value="OMPdecase"/>
    <property type="match status" value="1"/>
</dbReference>
<dbReference type="SUPFAM" id="SSF51366">
    <property type="entry name" value="Ribulose-phoshate binding barrel"/>
    <property type="match status" value="1"/>
</dbReference>
<dbReference type="PROSITE" id="PS00156">
    <property type="entry name" value="OMPDECASE"/>
    <property type="match status" value="1"/>
</dbReference>
<feature type="chain" id="PRO_1000066483" description="Orotidine 5'-phosphate decarboxylase">
    <location>
        <begin position="1"/>
        <end position="282"/>
    </location>
</feature>
<feature type="active site" description="Proton donor" evidence="1">
    <location>
        <position position="95"/>
    </location>
</feature>
<reference key="1">
    <citation type="journal article" date="2009" name="Environ. Microbiol.">
        <title>The genome of Polaromonas naphthalenivorans strain CJ2, isolated from coal tar-contaminated sediment, reveals physiological and metabolic versatility and evolution through extensive horizontal gene transfer.</title>
        <authorList>
            <person name="Yagi J.M."/>
            <person name="Sims D."/>
            <person name="Brettin T."/>
            <person name="Bruce D."/>
            <person name="Madsen E.L."/>
        </authorList>
    </citation>
    <scope>NUCLEOTIDE SEQUENCE [LARGE SCALE GENOMIC DNA]</scope>
    <source>
        <strain>CJ2</strain>
    </source>
</reference>
<keyword id="KW-0210">Decarboxylase</keyword>
<keyword id="KW-0456">Lyase</keyword>
<keyword id="KW-0665">Pyrimidine biosynthesis</keyword>
<keyword id="KW-1185">Reference proteome</keyword>
<accession>A1VU11</accession>
<sequence length="282" mass="30244">MTFIDMLGAAERQNHSMLCVGLDPEPARFPGRLAGDASKIYDFCAAIVDATADLVIAFKPQIAYFAAHRAEDQLERLMAHMRRVAPQVPVILDAKRGDIGSTAEQYAIEAFERYGADAVTLSPFMGFDSVAPYLKYHGKGSFLLCRTSNPGGDDLQNQRLASVDGQPLLYEHIARLAQGPWNLNGQLGLVVGATYPAEIERVRAVAPTLPLLIPGVGAQGGDAAATVRAGWRPGAPIIVNSSRAIIYASSGDDFADAARREALRTRDVLQAARADSLRVATP</sequence>
<gene>
    <name evidence="1" type="primary">pyrF</name>
    <name type="ordered locus">Pnap_3843</name>
</gene>